<accession>O80934</accession>
<accession>Q94B61</accession>
<gene>
    <name type="ordered locus">At2g37660</name>
    <name type="ORF">F13M22.16</name>
</gene>
<proteinExistence type="evidence at protein level"/>
<feature type="transit peptide" description="Chloroplast" evidence="1 3">
    <location>
        <begin position="1"/>
        <end position="69"/>
    </location>
</feature>
<feature type="chain" id="PRO_0000010471" description="Uncharacterized protein At2g37660, chloroplastic">
    <location>
        <begin position="70"/>
        <end position="325"/>
    </location>
</feature>
<feature type="modified residue" description="N-acetylalanine" evidence="3">
    <location>
        <position position="70"/>
    </location>
</feature>
<protein>
    <recommendedName>
        <fullName>Uncharacterized protein At2g37660, chloroplastic</fullName>
    </recommendedName>
</protein>
<dbReference type="EMBL" id="AC004684">
    <property type="protein sequence ID" value="AAC23636.2"/>
    <property type="molecule type" value="Genomic_DNA"/>
</dbReference>
<dbReference type="EMBL" id="CP002685">
    <property type="protein sequence ID" value="AEC09431.1"/>
    <property type="molecule type" value="Genomic_DNA"/>
</dbReference>
<dbReference type="EMBL" id="AY042827">
    <property type="protein sequence ID" value="AAK68767.1"/>
    <property type="molecule type" value="mRNA"/>
</dbReference>
<dbReference type="EMBL" id="AY081456">
    <property type="protein sequence ID" value="AAM10018.1"/>
    <property type="molecule type" value="mRNA"/>
</dbReference>
<dbReference type="EMBL" id="AY085201">
    <property type="protein sequence ID" value="AAM61751.1"/>
    <property type="molecule type" value="mRNA"/>
</dbReference>
<dbReference type="PIR" id="T02532">
    <property type="entry name" value="T02532"/>
</dbReference>
<dbReference type="RefSeq" id="NP_565868.1">
    <property type="nucleotide sequence ID" value="NM_129322.3"/>
</dbReference>
<dbReference type="SMR" id="O80934"/>
<dbReference type="BioGRID" id="3687">
    <property type="interactions" value="7"/>
</dbReference>
<dbReference type="FunCoup" id="O80934">
    <property type="interactions" value="2173"/>
</dbReference>
<dbReference type="STRING" id="3702.O80934"/>
<dbReference type="iPTMnet" id="O80934"/>
<dbReference type="PaxDb" id="3702-AT2G37660.1"/>
<dbReference type="ProteomicsDB" id="232398"/>
<dbReference type="EnsemblPlants" id="AT2G37660.1">
    <property type="protein sequence ID" value="AT2G37660.1"/>
    <property type="gene ID" value="AT2G37660"/>
</dbReference>
<dbReference type="GeneID" id="818343"/>
<dbReference type="Gramene" id="AT2G37660.1">
    <property type="protein sequence ID" value="AT2G37660.1"/>
    <property type="gene ID" value="AT2G37660"/>
</dbReference>
<dbReference type="KEGG" id="ath:AT2G37660"/>
<dbReference type="Araport" id="AT2G37660"/>
<dbReference type="TAIR" id="AT2G37660"/>
<dbReference type="eggNOG" id="KOG1203">
    <property type="taxonomic scope" value="Eukaryota"/>
</dbReference>
<dbReference type="HOGENOM" id="CLU_025711_0_0_1"/>
<dbReference type="InParanoid" id="O80934"/>
<dbReference type="OMA" id="EAMVICT"/>
<dbReference type="PhylomeDB" id="O80934"/>
<dbReference type="CD-CODE" id="4299E36E">
    <property type="entry name" value="Nucleolus"/>
</dbReference>
<dbReference type="PRO" id="PR:O80934"/>
<dbReference type="Proteomes" id="UP000006548">
    <property type="component" value="Chromosome 2"/>
</dbReference>
<dbReference type="ExpressionAtlas" id="O80934">
    <property type="expression patterns" value="baseline and differential"/>
</dbReference>
<dbReference type="GO" id="GO:0048046">
    <property type="term" value="C:apoplast"/>
    <property type="evidence" value="ECO:0007005"/>
    <property type="project" value="TAIR"/>
</dbReference>
<dbReference type="GO" id="GO:0009507">
    <property type="term" value="C:chloroplast"/>
    <property type="evidence" value="ECO:0007005"/>
    <property type="project" value="TAIR"/>
</dbReference>
<dbReference type="GO" id="GO:0009570">
    <property type="term" value="C:chloroplast stroma"/>
    <property type="evidence" value="ECO:0007005"/>
    <property type="project" value="TAIR"/>
</dbReference>
<dbReference type="GO" id="GO:0005783">
    <property type="term" value="C:endoplasmic reticulum"/>
    <property type="evidence" value="ECO:0007005"/>
    <property type="project" value="TAIR"/>
</dbReference>
<dbReference type="GO" id="GO:0009579">
    <property type="term" value="C:thylakoid"/>
    <property type="evidence" value="ECO:0007005"/>
    <property type="project" value="TAIR"/>
</dbReference>
<dbReference type="GO" id="GO:0005507">
    <property type="term" value="F:copper ion binding"/>
    <property type="evidence" value="ECO:0007005"/>
    <property type="project" value="TAIR"/>
</dbReference>
<dbReference type="GO" id="GO:0016491">
    <property type="term" value="F:oxidoreductase activity"/>
    <property type="evidence" value="ECO:0007669"/>
    <property type="project" value="InterPro"/>
</dbReference>
<dbReference type="CDD" id="cd05243">
    <property type="entry name" value="SDR_a5"/>
    <property type="match status" value="1"/>
</dbReference>
<dbReference type="FunFam" id="3.40.50.720:FF:000253">
    <property type="entry name" value="Uncharacterized protein At5g02240"/>
    <property type="match status" value="1"/>
</dbReference>
<dbReference type="Gene3D" id="3.40.50.720">
    <property type="entry name" value="NAD(P)-binding Rossmann-like Domain"/>
    <property type="match status" value="1"/>
</dbReference>
<dbReference type="InterPro" id="IPR016040">
    <property type="entry name" value="NAD(P)-bd_dom"/>
</dbReference>
<dbReference type="InterPro" id="IPR036291">
    <property type="entry name" value="NAD(P)-bd_dom_sf"/>
</dbReference>
<dbReference type="InterPro" id="IPR044163">
    <property type="entry name" value="SARED1-like"/>
</dbReference>
<dbReference type="PANTHER" id="PTHR14194">
    <property type="entry name" value="NITROGEN METABOLIC REGULATION PROTEIN NMR-RELATED"/>
    <property type="match status" value="1"/>
</dbReference>
<dbReference type="PANTHER" id="PTHR14194:SF86">
    <property type="entry name" value="OS05G0110300 PROTEIN"/>
    <property type="match status" value="1"/>
</dbReference>
<dbReference type="Pfam" id="PF13460">
    <property type="entry name" value="NAD_binding_10"/>
    <property type="match status" value="1"/>
</dbReference>
<dbReference type="SUPFAM" id="SSF51735">
    <property type="entry name" value="NAD(P)-binding Rossmann-fold domains"/>
    <property type="match status" value="1"/>
</dbReference>
<sequence>MAMMTTTTTTFFHPLLPANTYKSGAVASSFVSVPRSSSLQFRSLVSDSTSICGPSKFTGKNRRVSVTVSAAATTEPLTVLVTGAGGRTGQIVYKKLKERSEQFVARGLVRTKESKEKINGEDEVFIGDIRDTASIAPAVEGIDALVILTSAVPQMKPGFDPSKGGRPEFFFDDGAYPEQVDWIGQKNQIDAAKAAGVKQIVLVGSMGGTNINHPLNSIGNANILVWKRKAEQYLADSGIPYTIIRAGGLQDKDGGIRELLVGKDDELLETETRTIARADVAEVCVQALQLEEAKFKALDLASKPEGTGTPTKDFKALFTQVTTKF</sequence>
<organism>
    <name type="scientific">Arabidopsis thaliana</name>
    <name type="common">Mouse-ear cress</name>
    <dbReference type="NCBI Taxonomy" id="3702"/>
    <lineage>
        <taxon>Eukaryota</taxon>
        <taxon>Viridiplantae</taxon>
        <taxon>Streptophyta</taxon>
        <taxon>Embryophyta</taxon>
        <taxon>Tracheophyta</taxon>
        <taxon>Spermatophyta</taxon>
        <taxon>Magnoliopsida</taxon>
        <taxon>eudicotyledons</taxon>
        <taxon>Gunneridae</taxon>
        <taxon>Pentapetalae</taxon>
        <taxon>rosids</taxon>
        <taxon>malvids</taxon>
        <taxon>Brassicales</taxon>
        <taxon>Brassicaceae</taxon>
        <taxon>Camelineae</taxon>
        <taxon>Arabidopsis</taxon>
    </lineage>
</organism>
<keyword id="KW-0007">Acetylation</keyword>
<keyword id="KW-0150">Chloroplast</keyword>
<keyword id="KW-0934">Plastid</keyword>
<keyword id="KW-1185">Reference proteome</keyword>
<keyword id="KW-0809">Transit peptide</keyword>
<comment type="subcellular location">
    <subcellularLocation>
        <location evidence="2">Plastid</location>
        <location evidence="2">Chloroplast</location>
    </subcellularLocation>
</comment>
<comment type="similarity">
    <text evidence="2">Belongs to the NAD(P)-dependent epimerase/dehydratase family.</text>
</comment>
<reference key="1">
    <citation type="journal article" date="1999" name="Nature">
        <title>Sequence and analysis of chromosome 2 of the plant Arabidopsis thaliana.</title>
        <authorList>
            <person name="Lin X."/>
            <person name="Kaul S."/>
            <person name="Rounsley S.D."/>
            <person name="Shea T.P."/>
            <person name="Benito M.-I."/>
            <person name="Town C.D."/>
            <person name="Fujii C.Y."/>
            <person name="Mason T.M."/>
            <person name="Bowman C.L."/>
            <person name="Barnstead M.E."/>
            <person name="Feldblyum T.V."/>
            <person name="Buell C.R."/>
            <person name="Ketchum K.A."/>
            <person name="Lee J.J."/>
            <person name="Ronning C.M."/>
            <person name="Koo H.L."/>
            <person name="Moffat K.S."/>
            <person name="Cronin L.A."/>
            <person name="Shen M."/>
            <person name="Pai G."/>
            <person name="Van Aken S."/>
            <person name="Umayam L."/>
            <person name="Tallon L.J."/>
            <person name="Gill J.E."/>
            <person name="Adams M.D."/>
            <person name="Carrera A.J."/>
            <person name="Creasy T.H."/>
            <person name="Goodman H.M."/>
            <person name="Somerville C.R."/>
            <person name="Copenhaver G.P."/>
            <person name="Preuss D."/>
            <person name="Nierman W.C."/>
            <person name="White O."/>
            <person name="Eisen J.A."/>
            <person name="Salzberg S.L."/>
            <person name="Fraser C.M."/>
            <person name="Venter J.C."/>
        </authorList>
    </citation>
    <scope>NUCLEOTIDE SEQUENCE [LARGE SCALE GENOMIC DNA]</scope>
    <source>
        <strain>cv. Columbia</strain>
    </source>
</reference>
<reference key="2">
    <citation type="journal article" date="2017" name="Plant J.">
        <title>Araport11: a complete reannotation of the Arabidopsis thaliana reference genome.</title>
        <authorList>
            <person name="Cheng C.Y."/>
            <person name="Krishnakumar V."/>
            <person name="Chan A.P."/>
            <person name="Thibaud-Nissen F."/>
            <person name="Schobel S."/>
            <person name="Town C.D."/>
        </authorList>
    </citation>
    <scope>GENOME REANNOTATION</scope>
    <source>
        <strain>cv. Columbia</strain>
    </source>
</reference>
<reference key="3">
    <citation type="journal article" date="2003" name="Science">
        <title>Empirical analysis of transcriptional activity in the Arabidopsis genome.</title>
        <authorList>
            <person name="Yamada K."/>
            <person name="Lim J."/>
            <person name="Dale J.M."/>
            <person name="Chen H."/>
            <person name="Shinn P."/>
            <person name="Palm C.J."/>
            <person name="Southwick A.M."/>
            <person name="Wu H.C."/>
            <person name="Kim C.J."/>
            <person name="Nguyen M."/>
            <person name="Pham P.K."/>
            <person name="Cheuk R.F."/>
            <person name="Karlin-Newmann G."/>
            <person name="Liu S.X."/>
            <person name="Lam B."/>
            <person name="Sakano H."/>
            <person name="Wu T."/>
            <person name="Yu G."/>
            <person name="Miranda M."/>
            <person name="Quach H.L."/>
            <person name="Tripp M."/>
            <person name="Chang C.H."/>
            <person name="Lee J.M."/>
            <person name="Toriumi M.J."/>
            <person name="Chan M.M."/>
            <person name="Tang C.C."/>
            <person name="Onodera C.S."/>
            <person name="Deng J.M."/>
            <person name="Akiyama K."/>
            <person name="Ansari Y."/>
            <person name="Arakawa T."/>
            <person name="Banh J."/>
            <person name="Banno F."/>
            <person name="Bowser L."/>
            <person name="Brooks S.Y."/>
            <person name="Carninci P."/>
            <person name="Chao Q."/>
            <person name="Choy N."/>
            <person name="Enju A."/>
            <person name="Goldsmith A.D."/>
            <person name="Gurjal M."/>
            <person name="Hansen N.F."/>
            <person name="Hayashizaki Y."/>
            <person name="Johnson-Hopson C."/>
            <person name="Hsuan V.W."/>
            <person name="Iida K."/>
            <person name="Karnes M."/>
            <person name="Khan S."/>
            <person name="Koesema E."/>
            <person name="Ishida J."/>
            <person name="Jiang P.X."/>
            <person name="Jones T."/>
            <person name="Kawai J."/>
            <person name="Kamiya A."/>
            <person name="Meyers C."/>
            <person name="Nakajima M."/>
            <person name="Narusaka M."/>
            <person name="Seki M."/>
            <person name="Sakurai T."/>
            <person name="Satou M."/>
            <person name="Tamse R."/>
            <person name="Vaysberg M."/>
            <person name="Wallender E.K."/>
            <person name="Wong C."/>
            <person name="Yamamura Y."/>
            <person name="Yuan S."/>
            <person name="Shinozaki K."/>
            <person name="Davis R.W."/>
            <person name="Theologis A."/>
            <person name="Ecker J.R."/>
        </authorList>
    </citation>
    <scope>NUCLEOTIDE SEQUENCE [LARGE SCALE MRNA]</scope>
    <source>
        <strain>cv. Columbia</strain>
    </source>
</reference>
<reference key="4">
    <citation type="submission" date="2002-03" db="EMBL/GenBank/DDBJ databases">
        <title>Full-length cDNA from Arabidopsis thaliana.</title>
        <authorList>
            <person name="Brover V.V."/>
            <person name="Troukhan M.E."/>
            <person name="Alexandrov N.A."/>
            <person name="Lu Y.-P."/>
            <person name="Flavell R.B."/>
            <person name="Feldmann K.A."/>
        </authorList>
    </citation>
    <scope>NUCLEOTIDE SEQUENCE [LARGE SCALE MRNA]</scope>
</reference>
<reference key="5">
    <citation type="journal article" date="2012" name="Mol. Cell. Proteomics">
        <title>Comparative large-scale characterisation of plant vs. mammal proteins reveals similar and idiosyncratic N-alpha acetylation features.</title>
        <authorList>
            <person name="Bienvenut W.V."/>
            <person name="Sumpton D."/>
            <person name="Martinez A."/>
            <person name="Lilla S."/>
            <person name="Espagne C."/>
            <person name="Meinnel T."/>
            <person name="Giglione C."/>
        </authorList>
    </citation>
    <scope>ACETYLATION [LARGE SCALE ANALYSIS] AT ALA-70</scope>
    <scope>CLEAVAGE OF TRANSIT PEPTIDE [LARGE SCALE ANALYSIS] AFTER SER-69</scope>
    <scope>IDENTIFICATION BY MASS SPECTROMETRY [LARGE SCALE ANALYSIS]</scope>
</reference>
<evidence type="ECO:0000255" key="1"/>
<evidence type="ECO:0000305" key="2"/>
<evidence type="ECO:0007744" key="3">
    <source>
    </source>
</evidence>
<name>Y2766_ARATH</name>